<keyword id="KW-0547">Nucleotide-binding</keyword>
<reference key="1">
    <citation type="journal article" date="2003" name="Nat. Genet.">
        <title>Comparative analysis of the genome sequences of Bordetella pertussis, Bordetella parapertussis and Bordetella bronchiseptica.</title>
        <authorList>
            <person name="Parkhill J."/>
            <person name="Sebaihia M."/>
            <person name="Preston A."/>
            <person name="Murphy L.D."/>
            <person name="Thomson N.R."/>
            <person name="Harris D.E."/>
            <person name="Holden M.T.G."/>
            <person name="Churcher C.M."/>
            <person name="Bentley S.D."/>
            <person name="Mungall K.L."/>
            <person name="Cerdeno-Tarraga A.-M."/>
            <person name="Temple L."/>
            <person name="James K.D."/>
            <person name="Harris B."/>
            <person name="Quail M.A."/>
            <person name="Achtman M."/>
            <person name="Atkin R."/>
            <person name="Baker S."/>
            <person name="Basham D."/>
            <person name="Bason N."/>
            <person name="Cherevach I."/>
            <person name="Chillingworth T."/>
            <person name="Collins M."/>
            <person name="Cronin A."/>
            <person name="Davis P."/>
            <person name="Doggett J."/>
            <person name="Feltwell T."/>
            <person name="Goble A."/>
            <person name="Hamlin N."/>
            <person name="Hauser H."/>
            <person name="Holroyd S."/>
            <person name="Jagels K."/>
            <person name="Leather S."/>
            <person name="Moule S."/>
            <person name="Norberczak H."/>
            <person name="O'Neil S."/>
            <person name="Ormond D."/>
            <person name="Price C."/>
            <person name="Rabbinowitsch E."/>
            <person name="Rutter S."/>
            <person name="Sanders M."/>
            <person name="Saunders D."/>
            <person name="Seeger K."/>
            <person name="Sharp S."/>
            <person name="Simmonds M."/>
            <person name="Skelton J."/>
            <person name="Squares R."/>
            <person name="Squares S."/>
            <person name="Stevens K."/>
            <person name="Unwin L."/>
            <person name="Whitehead S."/>
            <person name="Barrell B.G."/>
            <person name="Maskell D.J."/>
        </authorList>
    </citation>
    <scope>NUCLEOTIDE SEQUENCE [LARGE SCALE GENOMIC DNA]</scope>
    <source>
        <strain>ATCC BAA-588 / NCTC 13252 / RB50</strain>
    </source>
</reference>
<proteinExistence type="inferred from homology"/>
<gene>
    <name type="ordered locus">BB1300</name>
</gene>
<organism>
    <name type="scientific">Bordetella bronchiseptica (strain ATCC BAA-588 / NCTC 13252 / RB50)</name>
    <name type="common">Alcaligenes bronchisepticus</name>
    <dbReference type="NCBI Taxonomy" id="257310"/>
    <lineage>
        <taxon>Bacteria</taxon>
        <taxon>Pseudomonadati</taxon>
        <taxon>Pseudomonadota</taxon>
        <taxon>Betaproteobacteria</taxon>
        <taxon>Burkholderiales</taxon>
        <taxon>Alcaligenaceae</taxon>
        <taxon>Bordetella</taxon>
    </lineage>
</organism>
<sequence>MPSFDVVSEVDKHELTNAVDQANRELSTRFDFKGTNASFELEGYVVTQVAPSAFQLKQMLDILRGRLSARSIDVRCMDVADPLENLGGARQKVTIKQGIEQAIAKKLIAAIKASKVKVESQINGEKLRITGKKRDDLQAVIALLRKTDVDLPLQFENFRD</sequence>
<protein>
    <recommendedName>
        <fullName evidence="1">Nucleotide-binding protein BB1300</fullName>
    </recommendedName>
</protein>
<feature type="chain" id="PRO_0000106174" description="Nucleotide-binding protein BB1300">
    <location>
        <begin position="1"/>
        <end position="160"/>
    </location>
</feature>
<evidence type="ECO:0000255" key="1">
    <source>
        <dbReference type="HAMAP-Rule" id="MF_00632"/>
    </source>
</evidence>
<comment type="function">
    <text evidence="1">Nucleotide-binding protein.</text>
</comment>
<comment type="similarity">
    <text evidence="1">Belongs to the YajQ family.</text>
</comment>
<name>Y1300_BORBR</name>
<dbReference type="EMBL" id="BX640441">
    <property type="protein sequence ID" value="CAE31798.1"/>
    <property type="molecule type" value="Genomic_DNA"/>
</dbReference>
<dbReference type="RefSeq" id="WP_003809252.1">
    <property type="nucleotide sequence ID" value="NC_002927.3"/>
</dbReference>
<dbReference type="SMR" id="Q7WMU0"/>
<dbReference type="KEGG" id="bbr:BB1300"/>
<dbReference type="eggNOG" id="COG1666">
    <property type="taxonomic scope" value="Bacteria"/>
</dbReference>
<dbReference type="HOGENOM" id="CLU_099839_1_0_4"/>
<dbReference type="Proteomes" id="UP000001027">
    <property type="component" value="Chromosome"/>
</dbReference>
<dbReference type="GO" id="GO:0005829">
    <property type="term" value="C:cytosol"/>
    <property type="evidence" value="ECO:0007669"/>
    <property type="project" value="TreeGrafter"/>
</dbReference>
<dbReference type="GO" id="GO:0000166">
    <property type="term" value="F:nucleotide binding"/>
    <property type="evidence" value="ECO:0007669"/>
    <property type="project" value="TreeGrafter"/>
</dbReference>
<dbReference type="CDD" id="cd11740">
    <property type="entry name" value="YajQ_like"/>
    <property type="match status" value="1"/>
</dbReference>
<dbReference type="Gene3D" id="3.30.70.860">
    <property type="match status" value="1"/>
</dbReference>
<dbReference type="Gene3D" id="3.30.70.990">
    <property type="entry name" value="YajQ-like, domain 2"/>
    <property type="match status" value="1"/>
</dbReference>
<dbReference type="HAMAP" id="MF_00632">
    <property type="entry name" value="YajQ"/>
    <property type="match status" value="1"/>
</dbReference>
<dbReference type="InterPro" id="IPR007551">
    <property type="entry name" value="DUF520"/>
</dbReference>
<dbReference type="InterPro" id="IPR035571">
    <property type="entry name" value="UPF0234-like_C"/>
</dbReference>
<dbReference type="InterPro" id="IPR035570">
    <property type="entry name" value="UPF0234_N"/>
</dbReference>
<dbReference type="InterPro" id="IPR036183">
    <property type="entry name" value="YajQ-like_sf"/>
</dbReference>
<dbReference type="NCBIfam" id="NF003819">
    <property type="entry name" value="PRK05412.1"/>
    <property type="match status" value="1"/>
</dbReference>
<dbReference type="PANTHER" id="PTHR30476">
    <property type="entry name" value="UPF0234 PROTEIN YAJQ"/>
    <property type="match status" value="1"/>
</dbReference>
<dbReference type="PANTHER" id="PTHR30476:SF0">
    <property type="entry name" value="UPF0234 PROTEIN YAJQ"/>
    <property type="match status" value="1"/>
</dbReference>
<dbReference type="Pfam" id="PF04461">
    <property type="entry name" value="DUF520"/>
    <property type="match status" value="1"/>
</dbReference>
<dbReference type="SUPFAM" id="SSF89963">
    <property type="entry name" value="YajQ-like"/>
    <property type="match status" value="2"/>
</dbReference>
<accession>Q7WMU0</accession>